<organism>
    <name type="scientific">Emericella nidulans (strain FGSC A4 / ATCC 38163 / CBS 112.46 / NRRL 194 / M139)</name>
    <name type="common">Aspergillus nidulans</name>
    <dbReference type="NCBI Taxonomy" id="227321"/>
    <lineage>
        <taxon>Eukaryota</taxon>
        <taxon>Fungi</taxon>
        <taxon>Dikarya</taxon>
        <taxon>Ascomycota</taxon>
        <taxon>Pezizomycotina</taxon>
        <taxon>Eurotiomycetes</taxon>
        <taxon>Eurotiomycetidae</taxon>
        <taxon>Eurotiales</taxon>
        <taxon>Aspergillaceae</taxon>
        <taxon>Aspergillus</taxon>
        <taxon>Aspergillus subgen. Nidulantes</taxon>
    </lineage>
</organism>
<accession>P14010</accession>
<accession>C8VMU4</accession>
<accession>Q5BB32</accession>
<evidence type="ECO:0000250" key="1"/>
<evidence type="ECO:0000250" key="2">
    <source>
        <dbReference type="UniProtKB" id="O13837"/>
    </source>
</evidence>
<evidence type="ECO:0000250" key="3">
    <source>
        <dbReference type="UniProtKB" id="P17649"/>
    </source>
</evidence>
<evidence type="ECO:0000250" key="4">
    <source>
        <dbReference type="UniProtKB" id="P80147"/>
    </source>
</evidence>
<evidence type="ECO:0000305" key="5"/>
<name>GABAT_EMENI</name>
<protein>
    <recommendedName>
        <fullName>4-aminobutyrate aminotransferase</fullName>
        <ecNumber>2.6.1.19</ecNumber>
    </recommendedName>
    <alternativeName>
        <fullName>GABA aminotransferase</fullName>
        <shortName>GABA-AT</shortName>
    </alternativeName>
    <alternativeName>
        <fullName>Gamma-amino-N-butyrate transaminase</fullName>
        <shortName>GABA transaminase</shortName>
    </alternativeName>
</protein>
<gene>
    <name type="primary">gatA</name>
    <name type="ORF">AN2248</name>
</gene>
<sequence length="498" mass="55489">MASAFRSSLKLRASARLPAVRTITTTPRLRAAEKPYFPNEPTAPKLATAIPGPKNKAASEQLNEVFDVRSLNMLADYTKSVGNYIADLDGNMLLDVYAQIASIPVGYNNPHLLKVAASPEMATSLINRPALGNFPSADWAHILKTGILKVAPKGLDQVFTAMAGSDANETAYKAAFMYYRQQQRGGPEKEFTEEEIQSSMLNQTPGSPQLSIMSFKAGFHGRLFGSLSTTRSKPIHKLDIPAFDWPQAPFPSLKYPLEEHAKENAEEEQRCLQEAERLIKEWHNPVAAIIVEPIQSEGGDNHASPAFFRGLREITKRNNVLFIVDEVQTGVGATGKFWAHDHWNLETPPDMVTFSKKAQTAGYYFGNPALRPNKPYRQFNTWMGDPSRALIFRGIIEEIERLFLVENTAATGDYLYSGLERLAKQYPEHLQNLRGKGQGTFIAWDTPKRDEFLVKGKGVGINIGGSGQNAVRLRPMLIFQKHHADILLESIEKIIKQL</sequence>
<reference key="1">
    <citation type="journal article" date="1989" name="Mol. Gen. Genet.">
        <title>Cloning and molecular characterisation of the amdR controlled gatA gene of Aspergillus nidulans.</title>
        <authorList>
            <person name="Richardson I.B."/>
            <person name="Hurley S.K."/>
            <person name="Hynes M.J."/>
        </authorList>
    </citation>
    <scope>NUCLEOTIDE SEQUENCE [GENOMIC DNA]</scope>
    <source>
        <strain>MH 3010</strain>
    </source>
</reference>
<reference key="2">
    <citation type="journal article" date="2005" name="Nature">
        <title>Sequencing of Aspergillus nidulans and comparative analysis with A. fumigatus and A. oryzae.</title>
        <authorList>
            <person name="Galagan J.E."/>
            <person name="Calvo S.E."/>
            <person name="Cuomo C."/>
            <person name="Ma L.-J."/>
            <person name="Wortman J.R."/>
            <person name="Batzoglou S."/>
            <person name="Lee S.-I."/>
            <person name="Bastuerkmen M."/>
            <person name="Spevak C.C."/>
            <person name="Clutterbuck J."/>
            <person name="Kapitonov V."/>
            <person name="Jurka J."/>
            <person name="Scazzocchio C."/>
            <person name="Farman M.L."/>
            <person name="Butler J."/>
            <person name="Purcell S."/>
            <person name="Harris S."/>
            <person name="Braus G.H."/>
            <person name="Draht O."/>
            <person name="Busch S."/>
            <person name="D'Enfert C."/>
            <person name="Bouchier C."/>
            <person name="Goldman G.H."/>
            <person name="Bell-Pedersen D."/>
            <person name="Griffiths-Jones S."/>
            <person name="Doonan J.H."/>
            <person name="Yu J."/>
            <person name="Vienken K."/>
            <person name="Pain A."/>
            <person name="Freitag M."/>
            <person name="Selker E.U."/>
            <person name="Archer D.B."/>
            <person name="Penalva M.A."/>
            <person name="Oakley B.R."/>
            <person name="Momany M."/>
            <person name="Tanaka T."/>
            <person name="Kumagai T."/>
            <person name="Asai K."/>
            <person name="Machida M."/>
            <person name="Nierman W.C."/>
            <person name="Denning D.W."/>
            <person name="Caddick M.X."/>
            <person name="Hynes M."/>
            <person name="Paoletti M."/>
            <person name="Fischer R."/>
            <person name="Miller B.L."/>
            <person name="Dyer P.S."/>
            <person name="Sachs M.S."/>
            <person name="Osmani S.A."/>
            <person name="Birren B.W."/>
        </authorList>
    </citation>
    <scope>NUCLEOTIDE SEQUENCE [LARGE SCALE GENOMIC DNA]</scope>
    <source>
        <strain>FGSC A4 / ATCC 38163 / CBS 112.46 / NRRL 194 / M139</strain>
    </source>
</reference>
<reference key="3">
    <citation type="journal article" date="2009" name="Fungal Genet. Biol.">
        <title>The 2008 update of the Aspergillus nidulans genome annotation: a community effort.</title>
        <authorList>
            <person name="Wortman J.R."/>
            <person name="Gilsenan J.M."/>
            <person name="Joardar V."/>
            <person name="Deegan J."/>
            <person name="Clutterbuck J."/>
            <person name="Andersen M.R."/>
            <person name="Archer D."/>
            <person name="Bencina M."/>
            <person name="Braus G."/>
            <person name="Coutinho P."/>
            <person name="von Dohren H."/>
            <person name="Doonan J."/>
            <person name="Driessen A.J."/>
            <person name="Durek P."/>
            <person name="Espeso E."/>
            <person name="Fekete E."/>
            <person name="Flipphi M."/>
            <person name="Estrada C.G."/>
            <person name="Geysens S."/>
            <person name="Goldman G."/>
            <person name="de Groot P.W."/>
            <person name="Hansen K."/>
            <person name="Harris S.D."/>
            <person name="Heinekamp T."/>
            <person name="Helmstaedt K."/>
            <person name="Henrissat B."/>
            <person name="Hofmann G."/>
            <person name="Homan T."/>
            <person name="Horio T."/>
            <person name="Horiuchi H."/>
            <person name="James S."/>
            <person name="Jones M."/>
            <person name="Karaffa L."/>
            <person name="Karanyi Z."/>
            <person name="Kato M."/>
            <person name="Keller N."/>
            <person name="Kelly D.E."/>
            <person name="Kiel J.A."/>
            <person name="Kim J.M."/>
            <person name="van der Klei I.J."/>
            <person name="Klis F.M."/>
            <person name="Kovalchuk A."/>
            <person name="Krasevec N."/>
            <person name="Kubicek C.P."/>
            <person name="Liu B."/>
            <person name="Maccabe A."/>
            <person name="Meyer V."/>
            <person name="Mirabito P."/>
            <person name="Miskei M."/>
            <person name="Mos M."/>
            <person name="Mullins J."/>
            <person name="Nelson D.R."/>
            <person name="Nielsen J."/>
            <person name="Oakley B.R."/>
            <person name="Osmani S.A."/>
            <person name="Pakula T."/>
            <person name="Paszewski A."/>
            <person name="Paulsen I."/>
            <person name="Pilsyk S."/>
            <person name="Pocsi I."/>
            <person name="Punt P.J."/>
            <person name="Ram A.F."/>
            <person name="Ren Q."/>
            <person name="Robellet X."/>
            <person name="Robson G."/>
            <person name="Seiboth B."/>
            <person name="van Solingen P."/>
            <person name="Specht T."/>
            <person name="Sun J."/>
            <person name="Taheri-Talesh N."/>
            <person name="Takeshita N."/>
            <person name="Ussery D."/>
            <person name="vanKuyk P.A."/>
            <person name="Visser H."/>
            <person name="van de Vondervoort P.J."/>
            <person name="de Vries R.P."/>
            <person name="Walton J."/>
            <person name="Xiang X."/>
            <person name="Xiong Y."/>
            <person name="Zeng A.P."/>
            <person name="Brandt B.W."/>
            <person name="Cornell M.J."/>
            <person name="van den Hondel C.A."/>
            <person name="Visser J."/>
            <person name="Oliver S.G."/>
            <person name="Turner G."/>
        </authorList>
    </citation>
    <scope>GENOME REANNOTATION</scope>
    <source>
        <strain>FGSC A4 / ATCC 38163 / CBS 112.46 / NRRL 194 / M139</strain>
    </source>
</reference>
<keyword id="KW-0032">Aminotransferase</keyword>
<keyword id="KW-0963">Cytoplasm</keyword>
<keyword id="KW-0663">Pyridoxal phosphate</keyword>
<keyword id="KW-1185">Reference proteome</keyword>
<keyword id="KW-0808">Transferase</keyword>
<proteinExistence type="inferred from homology"/>
<comment type="function">
    <text evidence="1">Deaminates gamma-aminobutyric acid (GABA) to succinate-semialdehyde, which in turn is converted to succinate by the succinate semialdehyde dehydrogenase (By similarity). Required for the degradation of GABA, which is important for utilization of GABA as nitrogen source.</text>
</comment>
<comment type="catalytic activity">
    <reaction>
        <text>4-aminobutanoate + 2-oxoglutarate = succinate semialdehyde + L-glutamate</text>
        <dbReference type="Rhea" id="RHEA:23352"/>
        <dbReference type="ChEBI" id="CHEBI:16810"/>
        <dbReference type="ChEBI" id="CHEBI:29985"/>
        <dbReference type="ChEBI" id="CHEBI:57706"/>
        <dbReference type="ChEBI" id="CHEBI:59888"/>
        <dbReference type="EC" id="2.6.1.19"/>
    </reaction>
</comment>
<comment type="cofactor">
    <cofactor evidence="3">
        <name>pyridoxal 5'-phosphate</name>
        <dbReference type="ChEBI" id="CHEBI:597326"/>
    </cofactor>
</comment>
<comment type="subunit">
    <text evidence="2">Homodimer.</text>
</comment>
<comment type="subcellular location">
    <subcellularLocation>
        <location evidence="1">Cytoplasm</location>
    </subcellularLocation>
</comment>
<comment type="similarity">
    <text evidence="5">Belongs to the class-III pyridoxal-phosphate-dependent aminotransferase family.</text>
</comment>
<dbReference type="EC" id="2.6.1.19"/>
<dbReference type="EMBL" id="X15647">
    <property type="protein sequence ID" value="CAA33674.1"/>
    <property type="molecule type" value="Genomic_DNA"/>
</dbReference>
<dbReference type="EMBL" id="AACD01000036">
    <property type="protein sequence ID" value="EAA63933.1"/>
    <property type="molecule type" value="Genomic_DNA"/>
</dbReference>
<dbReference type="EMBL" id="BN001307">
    <property type="protein sequence ID" value="CBF86462.1"/>
    <property type="molecule type" value="Genomic_DNA"/>
</dbReference>
<dbReference type="PIR" id="JQ0197">
    <property type="entry name" value="JQ0197"/>
</dbReference>
<dbReference type="RefSeq" id="XP_659852.1">
    <property type="nucleotide sequence ID" value="XM_654760.1"/>
</dbReference>
<dbReference type="SMR" id="P14010"/>
<dbReference type="FunCoup" id="P14010">
    <property type="interactions" value="278"/>
</dbReference>
<dbReference type="STRING" id="227321.P14010"/>
<dbReference type="EnsemblFungi" id="CBF86462">
    <property type="protein sequence ID" value="CBF86462"/>
    <property type="gene ID" value="ANIA_02248"/>
</dbReference>
<dbReference type="KEGG" id="ani:ANIA_02248"/>
<dbReference type="VEuPathDB" id="FungiDB:AN2248"/>
<dbReference type="eggNOG" id="KOG1405">
    <property type="taxonomic scope" value="Eukaryota"/>
</dbReference>
<dbReference type="HOGENOM" id="CLU_016922_12_0_1"/>
<dbReference type="InParanoid" id="P14010"/>
<dbReference type="OMA" id="GLMCAFD"/>
<dbReference type="OrthoDB" id="10260828at2759"/>
<dbReference type="Proteomes" id="UP000000560">
    <property type="component" value="Chromosome VII"/>
</dbReference>
<dbReference type="GO" id="GO:0005829">
    <property type="term" value="C:cytosol"/>
    <property type="evidence" value="ECO:0007669"/>
    <property type="project" value="EnsemblFungi"/>
</dbReference>
<dbReference type="GO" id="GO:0005739">
    <property type="term" value="C:mitochondrion"/>
    <property type="evidence" value="ECO:0000318"/>
    <property type="project" value="GO_Central"/>
</dbReference>
<dbReference type="GO" id="GO:0034386">
    <property type="term" value="F:4-aminobutyrate:2-oxoglutarate transaminase activity"/>
    <property type="evidence" value="ECO:0007669"/>
    <property type="project" value="UniProtKB-EC"/>
</dbReference>
<dbReference type="GO" id="GO:0030170">
    <property type="term" value="F:pyridoxal phosphate binding"/>
    <property type="evidence" value="ECO:0000318"/>
    <property type="project" value="GO_Central"/>
</dbReference>
<dbReference type="GO" id="GO:0043605">
    <property type="term" value="P:amide catabolic process"/>
    <property type="evidence" value="ECO:0000315"/>
    <property type="project" value="AspGD"/>
</dbReference>
<dbReference type="GO" id="GO:0009450">
    <property type="term" value="P:gamma-aminobutyric acid catabolic process"/>
    <property type="evidence" value="ECO:0000315"/>
    <property type="project" value="AspGD"/>
</dbReference>
<dbReference type="CDD" id="cd00610">
    <property type="entry name" value="OAT_like"/>
    <property type="match status" value="1"/>
</dbReference>
<dbReference type="FunFam" id="3.40.640.10:FF:000029">
    <property type="entry name" value="4-aminobutyrate aminotransferase, mitochondrial"/>
    <property type="match status" value="1"/>
</dbReference>
<dbReference type="Gene3D" id="3.90.1150.10">
    <property type="entry name" value="Aspartate Aminotransferase, domain 1"/>
    <property type="match status" value="1"/>
</dbReference>
<dbReference type="Gene3D" id="3.40.640.10">
    <property type="entry name" value="Type I PLP-dependent aspartate aminotransferase-like (Major domain)"/>
    <property type="match status" value="1"/>
</dbReference>
<dbReference type="InterPro" id="IPR004631">
    <property type="entry name" value="4NH2But_aminotransferase_euk"/>
</dbReference>
<dbReference type="InterPro" id="IPR005814">
    <property type="entry name" value="Aminotrans_3"/>
</dbReference>
<dbReference type="InterPro" id="IPR015424">
    <property type="entry name" value="PyrdxlP-dep_Trfase"/>
</dbReference>
<dbReference type="InterPro" id="IPR015421">
    <property type="entry name" value="PyrdxlP-dep_Trfase_major"/>
</dbReference>
<dbReference type="InterPro" id="IPR015422">
    <property type="entry name" value="PyrdxlP-dep_Trfase_small"/>
</dbReference>
<dbReference type="NCBIfam" id="TIGR00699">
    <property type="entry name" value="GABAtrns_euk"/>
    <property type="match status" value="1"/>
</dbReference>
<dbReference type="PANTHER" id="PTHR43206:SF1">
    <property type="entry name" value="4-AMINOBUTYRATE AMINOTRANSFERASE, MITOCHONDRIAL"/>
    <property type="match status" value="1"/>
</dbReference>
<dbReference type="PANTHER" id="PTHR43206">
    <property type="entry name" value="AMINOTRANSFERASE"/>
    <property type="match status" value="1"/>
</dbReference>
<dbReference type="Pfam" id="PF00202">
    <property type="entry name" value="Aminotran_3"/>
    <property type="match status" value="1"/>
</dbReference>
<dbReference type="PIRSF" id="PIRSF000521">
    <property type="entry name" value="Transaminase_4ab_Lys_Orn"/>
    <property type="match status" value="1"/>
</dbReference>
<dbReference type="SUPFAM" id="SSF53383">
    <property type="entry name" value="PLP-dependent transferases"/>
    <property type="match status" value="1"/>
</dbReference>
<dbReference type="PROSITE" id="PS00600">
    <property type="entry name" value="AA_TRANSFER_CLASS_3"/>
    <property type="match status" value="1"/>
</dbReference>
<feature type="chain" id="PRO_0000120379" description="4-aminobutyrate aminotransferase">
    <location>
        <begin position="1"/>
        <end position="498"/>
    </location>
</feature>
<feature type="binding site" description="in other chain" evidence="4">
    <location>
        <begin position="164"/>
        <end position="165"/>
    </location>
    <ligand>
        <name>pyridoxal 5'-phosphate</name>
        <dbReference type="ChEBI" id="CHEBI:597326"/>
        <note>ligand shared between dimeric partners</note>
    </ligand>
</feature>
<feature type="binding site" evidence="4">
    <location>
        <position position="222"/>
    </location>
    <ligand>
        <name>substrate</name>
    </ligand>
</feature>
<feature type="binding site" evidence="4">
    <location>
        <position position="381"/>
    </location>
    <ligand>
        <name>pyridoxal 5'-phosphate</name>
        <dbReference type="ChEBI" id="CHEBI:597326"/>
        <note>ligand shared between dimeric partners</note>
    </ligand>
</feature>
<feature type="modified residue" description="N6-(pyridoxal phosphate)lysine" evidence="4">
    <location>
        <position position="356"/>
    </location>
</feature>